<sequence>MLSHDWTDNRKNLMLFSGRAHPELAEQVAKELDMHVTTQDAREFANGEIFVRFHESVRGCDAFVLQSCPAPVNTWLMEQLIMIDALKRGSAKRITAVIPFYPYARQDKKHRGREPISARLVADLLKTAGADRIVTVDLHTDQIQGFFDGPVDHMRGQNLLTGYIKNNYPDTNMVVVSPDSGRVRIAEKWGDALGGVPLAFIHKTRDLRVPNQVVSNRVVGEVEGRTCVLIDDMIDTGGTVAGAVQLLRNDGASDVIIAATHGVLSPPAAERLAQYGTREVIVTNTLPIGEEKRFPQLTVLSIAPLLASTIRAIFENGSVTGLFDGEA</sequence>
<organism>
    <name type="scientific">Mycobacterium leprae (strain TN)</name>
    <dbReference type="NCBI Taxonomy" id="272631"/>
    <lineage>
        <taxon>Bacteria</taxon>
        <taxon>Bacillati</taxon>
        <taxon>Actinomycetota</taxon>
        <taxon>Actinomycetes</taxon>
        <taxon>Mycobacteriales</taxon>
        <taxon>Mycobacteriaceae</taxon>
        <taxon>Mycobacterium</taxon>
    </lineage>
</organism>
<reference key="1">
    <citation type="journal article" date="2001" name="Nature">
        <title>Massive gene decay in the leprosy bacillus.</title>
        <authorList>
            <person name="Cole S.T."/>
            <person name="Eiglmeier K."/>
            <person name="Parkhill J."/>
            <person name="James K.D."/>
            <person name="Thomson N.R."/>
            <person name="Wheeler P.R."/>
            <person name="Honore N."/>
            <person name="Garnier T."/>
            <person name="Churcher C.M."/>
            <person name="Harris D.E."/>
            <person name="Mungall K.L."/>
            <person name="Basham D."/>
            <person name="Brown D."/>
            <person name="Chillingworth T."/>
            <person name="Connor R."/>
            <person name="Davies R.M."/>
            <person name="Devlin K."/>
            <person name="Duthoy S."/>
            <person name="Feltwell T."/>
            <person name="Fraser A."/>
            <person name="Hamlin N."/>
            <person name="Holroyd S."/>
            <person name="Hornsby T."/>
            <person name="Jagels K."/>
            <person name="Lacroix C."/>
            <person name="Maclean J."/>
            <person name="Moule S."/>
            <person name="Murphy L.D."/>
            <person name="Oliver K."/>
            <person name="Quail M.A."/>
            <person name="Rajandream M.A."/>
            <person name="Rutherford K.M."/>
            <person name="Rutter S."/>
            <person name="Seeger K."/>
            <person name="Simon S."/>
            <person name="Simmonds M."/>
            <person name="Skelton J."/>
            <person name="Squares R."/>
            <person name="Squares S."/>
            <person name="Stevens K."/>
            <person name="Taylor K."/>
            <person name="Whitehead S."/>
            <person name="Woodward J.R."/>
            <person name="Barrell B.G."/>
        </authorList>
    </citation>
    <scope>NUCLEOTIDE SEQUENCE [LARGE SCALE GENOMIC DNA]</scope>
    <source>
        <strain>TN</strain>
    </source>
</reference>
<name>KPRS_MYCLE</name>
<keyword id="KW-0067">ATP-binding</keyword>
<keyword id="KW-0963">Cytoplasm</keyword>
<keyword id="KW-0418">Kinase</keyword>
<keyword id="KW-0460">Magnesium</keyword>
<keyword id="KW-0479">Metal-binding</keyword>
<keyword id="KW-0545">Nucleotide biosynthesis</keyword>
<keyword id="KW-0547">Nucleotide-binding</keyword>
<keyword id="KW-1185">Reference proteome</keyword>
<keyword id="KW-0808">Transferase</keyword>
<evidence type="ECO:0000255" key="1">
    <source>
        <dbReference type="HAMAP-Rule" id="MF_00583"/>
    </source>
</evidence>
<comment type="function">
    <text evidence="1">Involved in the biosynthesis of the central metabolite phospho-alpha-D-ribosyl-1-pyrophosphate (PRPP) via the transfer of pyrophosphoryl group from ATP to 1-hydroxyl of ribose-5-phosphate (Rib-5-P).</text>
</comment>
<comment type="catalytic activity">
    <reaction evidence="1">
        <text>D-ribose 5-phosphate + ATP = 5-phospho-alpha-D-ribose 1-diphosphate + AMP + H(+)</text>
        <dbReference type="Rhea" id="RHEA:15609"/>
        <dbReference type="ChEBI" id="CHEBI:15378"/>
        <dbReference type="ChEBI" id="CHEBI:30616"/>
        <dbReference type="ChEBI" id="CHEBI:58017"/>
        <dbReference type="ChEBI" id="CHEBI:78346"/>
        <dbReference type="ChEBI" id="CHEBI:456215"/>
        <dbReference type="EC" id="2.7.6.1"/>
    </reaction>
</comment>
<comment type="cofactor">
    <cofactor evidence="1">
        <name>Mg(2+)</name>
        <dbReference type="ChEBI" id="CHEBI:18420"/>
    </cofactor>
    <text evidence="1">Binds 2 Mg(2+) ions per subunit.</text>
</comment>
<comment type="pathway">
    <text evidence="1">Metabolic intermediate biosynthesis; 5-phospho-alpha-D-ribose 1-diphosphate biosynthesis; 5-phospho-alpha-D-ribose 1-diphosphate from D-ribose 5-phosphate (route I): step 1/1.</text>
</comment>
<comment type="subunit">
    <text evidence="1">Homohexamer.</text>
</comment>
<comment type="subcellular location">
    <subcellularLocation>
        <location evidence="1">Cytoplasm</location>
    </subcellularLocation>
</comment>
<comment type="similarity">
    <text evidence="1">Belongs to the ribose-phosphate pyrophosphokinase family. Class I subfamily.</text>
</comment>
<dbReference type="EC" id="2.7.6.1" evidence="1"/>
<dbReference type="EMBL" id="AL583917">
    <property type="protein sequence ID" value="CAC29756.1"/>
    <property type="molecule type" value="Genomic_DNA"/>
</dbReference>
<dbReference type="PIR" id="H86939">
    <property type="entry name" value="H86939"/>
</dbReference>
<dbReference type="RefSeq" id="NP_301307.1">
    <property type="nucleotide sequence ID" value="NC_002677.1"/>
</dbReference>
<dbReference type="SMR" id="Q9CD45"/>
<dbReference type="STRING" id="272631.gene:17574065"/>
<dbReference type="KEGG" id="mle:ML0248"/>
<dbReference type="PATRIC" id="fig|272631.5.peg.384"/>
<dbReference type="Leproma" id="ML0248"/>
<dbReference type="eggNOG" id="COG0462">
    <property type="taxonomic scope" value="Bacteria"/>
</dbReference>
<dbReference type="HOGENOM" id="CLU_033546_4_0_11"/>
<dbReference type="OrthoDB" id="9777067at2"/>
<dbReference type="UniPathway" id="UPA00087">
    <property type="reaction ID" value="UER00172"/>
</dbReference>
<dbReference type="Proteomes" id="UP000000806">
    <property type="component" value="Chromosome"/>
</dbReference>
<dbReference type="GO" id="GO:0005737">
    <property type="term" value="C:cytoplasm"/>
    <property type="evidence" value="ECO:0007669"/>
    <property type="project" value="UniProtKB-SubCell"/>
</dbReference>
<dbReference type="GO" id="GO:0002189">
    <property type="term" value="C:ribose phosphate diphosphokinase complex"/>
    <property type="evidence" value="ECO:0007669"/>
    <property type="project" value="TreeGrafter"/>
</dbReference>
<dbReference type="GO" id="GO:0005524">
    <property type="term" value="F:ATP binding"/>
    <property type="evidence" value="ECO:0007669"/>
    <property type="project" value="UniProtKB-KW"/>
</dbReference>
<dbReference type="GO" id="GO:0016301">
    <property type="term" value="F:kinase activity"/>
    <property type="evidence" value="ECO:0007669"/>
    <property type="project" value="UniProtKB-KW"/>
</dbReference>
<dbReference type="GO" id="GO:0000287">
    <property type="term" value="F:magnesium ion binding"/>
    <property type="evidence" value="ECO:0007669"/>
    <property type="project" value="UniProtKB-UniRule"/>
</dbReference>
<dbReference type="GO" id="GO:0004749">
    <property type="term" value="F:ribose phosphate diphosphokinase activity"/>
    <property type="evidence" value="ECO:0007669"/>
    <property type="project" value="UniProtKB-UniRule"/>
</dbReference>
<dbReference type="GO" id="GO:0006015">
    <property type="term" value="P:5-phosphoribose 1-diphosphate biosynthetic process"/>
    <property type="evidence" value="ECO:0007669"/>
    <property type="project" value="UniProtKB-UniRule"/>
</dbReference>
<dbReference type="GO" id="GO:0006164">
    <property type="term" value="P:purine nucleotide biosynthetic process"/>
    <property type="evidence" value="ECO:0007669"/>
    <property type="project" value="TreeGrafter"/>
</dbReference>
<dbReference type="GO" id="GO:0009156">
    <property type="term" value="P:ribonucleoside monophosphate biosynthetic process"/>
    <property type="evidence" value="ECO:0007669"/>
    <property type="project" value="InterPro"/>
</dbReference>
<dbReference type="CDD" id="cd06223">
    <property type="entry name" value="PRTases_typeI"/>
    <property type="match status" value="1"/>
</dbReference>
<dbReference type="FunFam" id="3.40.50.2020:FF:000007">
    <property type="entry name" value="Ribose-phosphate pyrophosphokinase"/>
    <property type="match status" value="1"/>
</dbReference>
<dbReference type="Gene3D" id="3.40.50.2020">
    <property type="match status" value="2"/>
</dbReference>
<dbReference type="HAMAP" id="MF_00583_B">
    <property type="entry name" value="RibP_PPkinase_B"/>
    <property type="match status" value="1"/>
</dbReference>
<dbReference type="InterPro" id="IPR000842">
    <property type="entry name" value="PRib_PP_synth_CS"/>
</dbReference>
<dbReference type="InterPro" id="IPR029099">
    <property type="entry name" value="Pribosyltran_N"/>
</dbReference>
<dbReference type="InterPro" id="IPR000836">
    <property type="entry name" value="PRibTrfase_dom"/>
</dbReference>
<dbReference type="InterPro" id="IPR029057">
    <property type="entry name" value="PRTase-like"/>
</dbReference>
<dbReference type="InterPro" id="IPR005946">
    <property type="entry name" value="Rib-P_diPkinase"/>
</dbReference>
<dbReference type="InterPro" id="IPR037515">
    <property type="entry name" value="Rib-P_diPkinase_bac"/>
</dbReference>
<dbReference type="NCBIfam" id="NF002320">
    <property type="entry name" value="PRK01259.1"/>
    <property type="match status" value="1"/>
</dbReference>
<dbReference type="NCBIfam" id="NF002844">
    <property type="entry name" value="PRK03092.1"/>
    <property type="match status" value="1"/>
</dbReference>
<dbReference type="NCBIfam" id="TIGR01251">
    <property type="entry name" value="ribP_PPkin"/>
    <property type="match status" value="1"/>
</dbReference>
<dbReference type="PANTHER" id="PTHR10210">
    <property type="entry name" value="RIBOSE-PHOSPHATE DIPHOSPHOKINASE FAMILY MEMBER"/>
    <property type="match status" value="1"/>
</dbReference>
<dbReference type="PANTHER" id="PTHR10210:SF41">
    <property type="entry name" value="RIBOSE-PHOSPHATE PYROPHOSPHOKINASE 1, CHLOROPLASTIC"/>
    <property type="match status" value="1"/>
</dbReference>
<dbReference type="Pfam" id="PF14572">
    <property type="entry name" value="Pribosyl_synth"/>
    <property type="match status" value="1"/>
</dbReference>
<dbReference type="Pfam" id="PF13793">
    <property type="entry name" value="Pribosyltran_N"/>
    <property type="match status" value="1"/>
</dbReference>
<dbReference type="SMART" id="SM01400">
    <property type="entry name" value="Pribosyltran_N"/>
    <property type="match status" value="1"/>
</dbReference>
<dbReference type="SUPFAM" id="SSF53271">
    <property type="entry name" value="PRTase-like"/>
    <property type="match status" value="1"/>
</dbReference>
<dbReference type="PROSITE" id="PS00114">
    <property type="entry name" value="PRPP_SYNTHASE"/>
    <property type="match status" value="1"/>
</dbReference>
<gene>
    <name evidence="1" type="primary">prs</name>
    <name type="synonym">prsA</name>
    <name type="ordered locus">ML0248</name>
</gene>
<accession>Q9CD45</accession>
<feature type="chain" id="PRO_0000141161" description="Ribose-phosphate pyrophosphokinase">
    <location>
        <begin position="1"/>
        <end position="327"/>
    </location>
</feature>
<feature type="active site" evidence="1">
    <location>
        <position position="203"/>
    </location>
</feature>
<feature type="binding site" evidence="1">
    <location>
        <begin position="46"/>
        <end position="48"/>
    </location>
    <ligand>
        <name>ATP</name>
        <dbReference type="ChEBI" id="CHEBI:30616"/>
    </ligand>
</feature>
<feature type="binding site" evidence="1">
    <location>
        <begin position="105"/>
        <end position="106"/>
    </location>
    <ligand>
        <name>ATP</name>
        <dbReference type="ChEBI" id="CHEBI:30616"/>
    </ligand>
</feature>
<feature type="binding site" evidence="1">
    <location>
        <position position="139"/>
    </location>
    <ligand>
        <name>Mg(2+)</name>
        <dbReference type="ChEBI" id="CHEBI:18420"/>
        <label>1</label>
    </ligand>
</feature>
<feature type="binding site" evidence="1">
    <location>
        <position position="179"/>
    </location>
    <ligand>
        <name>Mg(2+)</name>
        <dbReference type="ChEBI" id="CHEBI:18420"/>
        <label>2</label>
    </ligand>
</feature>
<feature type="binding site" evidence="1">
    <location>
        <position position="205"/>
    </location>
    <ligand>
        <name>D-ribose 5-phosphate</name>
        <dbReference type="ChEBI" id="CHEBI:78346"/>
    </ligand>
</feature>
<feature type="binding site" evidence="1">
    <location>
        <position position="231"/>
    </location>
    <ligand>
        <name>D-ribose 5-phosphate</name>
        <dbReference type="ChEBI" id="CHEBI:78346"/>
    </ligand>
</feature>
<feature type="binding site" evidence="1">
    <location>
        <begin position="235"/>
        <end position="239"/>
    </location>
    <ligand>
        <name>D-ribose 5-phosphate</name>
        <dbReference type="ChEBI" id="CHEBI:78346"/>
    </ligand>
</feature>
<proteinExistence type="inferred from homology"/>
<protein>
    <recommendedName>
        <fullName evidence="1">Ribose-phosphate pyrophosphokinase</fullName>
        <shortName evidence="1">RPPK</shortName>
        <ecNumber evidence="1">2.7.6.1</ecNumber>
    </recommendedName>
    <alternativeName>
        <fullName evidence="1">5-phospho-D-ribosyl alpha-1-diphosphate synthase</fullName>
    </alternativeName>
    <alternativeName>
        <fullName evidence="1">Phosphoribosyl diphosphate synthase</fullName>
    </alternativeName>
    <alternativeName>
        <fullName evidence="1">Phosphoribosyl pyrophosphate synthase</fullName>
        <shortName evidence="1">P-Rib-PP synthase</shortName>
        <shortName evidence="1">PRPP synthase</shortName>
        <shortName evidence="1">PRPPase</shortName>
    </alternativeName>
</protein>